<dbReference type="EMBL" id="AP009247">
    <property type="protein sequence ID" value="BAF61852.1"/>
    <property type="molecule type" value="Genomic_DNA"/>
</dbReference>
<dbReference type="RefSeq" id="WP_011930122.1">
    <property type="nucleotide sequence ID" value="NC_009465.1"/>
</dbReference>
<dbReference type="SMR" id="A5CW29"/>
<dbReference type="STRING" id="412965.COSY_0740"/>
<dbReference type="KEGG" id="vok:COSY_0740"/>
<dbReference type="eggNOG" id="COG0080">
    <property type="taxonomic scope" value="Bacteria"/>
</dbReference>
<dbReference type="HOGENOM" id="CLU_074237_2_0_6"/>
<dbReference type="OrthoDB" id="9802408at2"/>
<dbReference type="Proteomes" id="UP000000247">
    <property type="component" value="Chromosome"/>
</dbReference>
<dbReference type="GO" id="GO:0022625">
    <property type="term" value="C:cytosolic large ribosomal subunit"/>
    <property type="evidence" value="ECO:0007669"/>
    <property type="project" value="TreeGrafter"/>
</dbReference>
<dbReference type="GO" id="GO:0070180">
    <property type="term" value="F:large ribosomal subunit rRNA binding"/>
    <property type="evidence" value="ECO:0007669"/>
    <property type="project" value="UniProtKB-UniRule"/>
</dbReference>
<dbReference type="GO" id="GO:0003735">
    <property type="term" value="F:structural constituent of ribosome"/>
    <property type="evidence" value="ECO:0007669"/>
    <property type="project" value="InterPro"/>
</dbReference>
<dbReference type="GO" id="GO:0006412">
    <property type="term" value="P:translation"/>
    <property type="evidence" value="ECO:0007669"/>
    <property type="project" value="UniProtKB-UniRule"/>
</dbReference>
<dbReference type="CDD" id="cd00349">
    <property type="entry name" value="Ribosomal_L11"/>
    <property type="match status" value="1"/>
</dbReference>
<dbReference type="FunFam" id="1.10.10.250:FF:000001">
    <property type="entry name" value="50S ribosomal protein L11"/>
    <property type="match status" value="1"/>
</dbReference>
<dbReference type="FunFam" id="3.30.1550.10:FF:000001">
    <property type="entry name" value="50S ribosomal protein L11"/>
    <property type="match status" value="1"/>
</dbReference>
<dbReference type="Gene3D" id="1.10.10.250">
    <property type="entry name" value="Ribosomal protein L11, C-terminal domain"/>
    <property type="match status" value="1"/>
</dbReference>
<dbReference type="Gene3D" id="3.30.1550.10">
    <property type="entry name" value="Ribosomal protein L11/L12, N-terminal domain"/>
    <property type="match status" value="1"/>
</dbReference>
<dbReference type="HAMAP" id="MF_00736">
    <property type="entry name" value="Ribosomal_uL11"/>
    <property type="match status" value="1"/>
</dbReference>
<dbReference type="InterPro" id="IPR000911">
    <property type="entry name" value="Ribosomal_uL11"/>
</dbReference>
<dbReference type="InterPro" id="IPR006519">
    <property type="entry name" value="Ribosomal_uL11_bac-typ"/>
</dbReference>
<dbReference type="InterPro" id="IPR020783">
    <property type="entry name" value="Ribosomal_uL11_C"/>
</dbReference>
<dbReference type="InterPro" id="IPR036769">
    <property type="entry name" value="Ribosomal_uL11_C_sf"/>
</dbReference>
<dbReference type="InterPro" id="IPR020784">
    <property type="entry name" value="Ribosomal_uL11_N"/>
</dbReference>
<dbReference type="InterPro" id="IPR036796">
    <property type="entry name" value="Ribosomal_uL11_N_sf"/>
</dbReference>
<dbReference type="NCBIfam" id="TIGR01632">
    <property type="entry name" value="L11_bact"/>
    <property type="match status" value="1"/>
</dbReference>
<dbReference type="PANTHER" id="PTHR11661">
    <property type="entry name" value="60S RIBOSOMAL PROTEIN L12"/>
    <property type="match status" value="1"/>
</dbReference>
<dbReference type="PANTHER" id="PTHR11661:SF1">
    <property type="entry name" value="LARGE RIBOSOMAL SUBUNIT PROTEIN UL11M"/>
    <property type="match status" value="1"/>
</dbReference>
<dbReference type="Pfam" id="PF00298">
    <property type="entry name" value="Ribosomal_L11"/>
    <property type="match status" value="1"/>
</dbReference>
<dbReference type="Pfam" id="PF03946">
    <property type="entry name" value="Ribosomal_L11_N"/>
    <property type="match status" value="1"/>
</dbReference>
<dbReference type="SMART" id="SM00649">
    <property type="entry name" value="RL11"/>
    <property type="match status" value="1"/>
</dbReference>
<dbReference type="SUPFAM" id="SSF54747">
    <property type="entry name" value="Ribosomal L11/L12e N-terminal domain"/>
    <property type="match status" value="1"/>
</dbReference>
<dbReference type="SUPFAM" id="SSF46906">
    <property type="entry name" value="Ribosomal protein L11, C-terminal domain"/>
    <property type="match status" value="1"/>
</dbReference>
<proteinExistence type="inferred from homology"/>
<accession>A5CW29</accession>
<evidence type="ECO:0000255" key="1">
    <source>
        <dbReference type="HAMAP-Rule" id="MF_00736"/>
    </source>
</evidence>
<evidence type="ECO:0000305" key="2"/>
<reference key="1">
    <citation type="journal article" date="2007" name="Curr. Biol.">
        <title>Reduced genome of the thioautotrophic intracellular symbiont in a deep-sea clam, Calyptogena okutanii.</title>
        <authorList>
            <person name="Kuwahara H."/>
            <person name="Yoshida T."/>
            <person name="Takaki Y."/>
            <person name="Shimamura S."/>
            <person name="Nishi S."/>
            <person name="Harada M."/>
            <person name="Matsuyama K."/>
            <person name="Takishita K."/>
            <person name="Kawato M."/>
            <person name="Uematsu K."/>
            <person name="Fujiwara Y."/>
            <person name="Sato T."/>
            <person name="Kato C."/>
            <person name="Kitagawa M."/>
            <person name="Kato I."/>
            <person name="Maruyama T."/>
        </authorList>
    </citation>
    <scope>NUCLEOTIDE SEQUENCE [LARGE SCALE GENOMIC DNA]</scope>
    <source>
        <strain>HA</strain>
    </source>
</reference>
<comment type="function">
    <text evidence="1">Forms part of the ribosomal stalk which helps the ribosome interact with GTP-bound translation factors.</text>
</comment>
<comment type="subunit">
    <text evidence="1">Part of the ribosomal stalk of the 50S ribosomal subunit. Interacts with L10 and the large rRNA to form the base of the stalk. L10 forms an elongated spine to which L12 dimers bind in a sequential fashion forming a multimeric L10(L12)X complex.</text>
</comment>
<comment type="PTM">
    <text evidence="1">One or more lysine residues are methylated.</text>
</comment>
<comment type="similarity">
    <text evidence="1">Belongs to the universal ribosomal protein uL11 family.</text>
</comment>
<feature type="chain" id="PRO_1000046291" description="Large ribosomal subunit protein uL11">
    <location>
        <begin position="1"/>
        <end position="142"/>
    </location>
</feature>
<protein>
    <recommendedName>
        <fullName evidence="1">Large ribosomal subunit protein uL11</fullName>
    </recommendedName>
    <alternativeName>
        <fullName evidence="2">50S ribosomal protein L11</fullName>
    </alternativeName>
</protein>
<name>RL11_VESOH</name>
<gene>
    <name evidence="1" type="primary">rplK</name>
    <name type="ordered locus">COSY_0740</name>
</gene>
<organism>
    <name type="scientific">Vesicomyosocius okutanii subsp. Calyptogena okutanii (strain HA)</name>
    <dbReference type="NCBI Taxonomy" id="412965"/>
    <lineage>
        <taxon>Bacteria</taxon>
        <taxon>Pseudomonadati</taxon>
        <taxon>Pseudomonadota</taxon>
        <taxon>Gammaproteobacteria</taxon>
        <taxon>Candidatus Pseudothioglobaceae</taxon>
        <taxon>Candidatus Vesicomyosocius</taxon>
    </lineage>
</organism>
<sequence length="142" mass="15216">MAKKIESYIKLQVAAQEANPSPPVGPALGQHGVNIMEFCKAFNSKTQEINKGMKVPVVITVYSDRSFSFVTKTPPAALLILKIIDIKKGSGSPHLDKVGSITRAQLEEVASMKMKDLNANNMDSAVNIIAGTARSMGIMVEG</sequence>
<keyword id="KW-0488">Methylation</keyword>
<keyword id="KW-1185">Reference proteome</keyword>
<keyword id="KW-0687">Ribonucleoprotein</keyword>
<keyword id="KW-0689">Ribosomal protein</keyword>
<keyword id="KW-0694">RNA-binding</keyword>
<keyword id="KW-0699">rRNA-binding</keyword>